<dbReference type="EC" id="6.2.1.5" evidence="1"/>
<dbReference type="EMBL" id="CP001340">
    <property type="protein sequence ID" value="ACL93807.1"/>
    <property type="molecule type" value="Genomic_DNA"/>
</dbReference>
<dbReference type="RefSeq" id="WP_010918226.1">
    <property type="nucleotide sequence ID" value="NC_011916.1"/>
</dbReference>
<dbReference type="RefSeq" id="YP_002515715.1">
    <property type="nucleotide sequence ID" value="NC_011916.1"/>
</dbReference>
<dbReference type="SMR" id="B8GYZ1"/>
<dbReference type="GeneID" id="7331039"/>
<dbReference type="KEGG" id="ccs:CCNA_00340"/>
<dbReference type="PATRIC" id="fig|565050.3.peg.339"/>
<dbReference type="HOGENOM" id="CLU_037430_0_2_5"/>
<dbReference type="OrthoDB" id="9802602at2"/>
<dbReference type="PhylomeDB" id="B8GYZ1"/>
<dbReference type="UniPathway" id="UPA00223">
    <property type="reaction ID" value="UER00999"/>
</dbReference>
<dbReference type="Proteomes" id="UP000001364">
    <property type="component" value="Chromosome"/>
</dbReference>
<dbReference type="GO" id="GO:0005829">
    <property type="term" value="C:cytosol"/>
    <property type="evidence" value="ECO:0007669"/>
    <property type="project" value="TreeGrafter"/>
</dbReference>
<dbReference type="GO" id="GO:0042709">
    <property type="term" value="C:succinate-CoA ligase complex"/>
    <property type="evidence" value="ECO:0007669"/>
    <property type="project" value="TreeGrafter"/>
</dbReference>
<dbReference type="GO" id="GO:0005524">
    <property type="term" value="F:ATP binding"/>
    <property type="evidence" value="ECO:0007669"/>
    <property type="project" value="UniProtKB-UniRule"/>
</dbReference>
<dbReference type="GO" id="GO:0000287">
    <property type="term" value="F:magnesium ion binding"/>
    <property type="evidence" value="ECO:0007669"/>
    <property type="project" value="UniProtKB-UniRule"/>
</dbReference>
<dbReference type="GO" id="GO:0004775">
    <property type="term" value="F:succinate-CoA ligase (ADP-forming) activity"/>
    <property type="evidence" value="ECO:0007669"/>
    <property type="project" value="UniProtKB-UniRule"/>
</dbReference>
<dbReference type="GO" id="GO:0004776">
    <property type="term" value="F:succinate-CoA ligase (GDP-forming) activity"/>
    <property type="evidence" value="ECO:0007669"/>
    <property type="project" value="RHEA"/>
</dbReference>
<dbReference type="GO" id="GO:0006104">
    <property type="term" value="P:succinyl-CoA metabolic process"/>
    <property type="evidence" value="ECO:0007669"/>
    <property type="project" value="TreeGrafter"/>
</dbReference>
<dbReference type="GO" id="GO:0006099">
    <property type="term" value="P:tricarboxylic acid cycle"/>
    <property type="evidence" value="ECO:0007669"/>
    <property type="project" value="UniProtKB-UniRule"/>
</dbReference>
<dbReference type="FunFam" id="3.30.1490.20:FF:000002">
    <property type="entry name" value="Succinate--CoA ligase [ADP-forming] subunit beta"/>
    <property type="match status" value="1"/>
</dbReference>
<dbReference type="FunFam" id="3.30.470.20:FF:000002">
    <property type="entry name" value="Succinate--CoA ligase [ADP-forming] subunit beta"/>
    <property type="match status" value="1"/>
</dbReference>
<dbReference type="FunFam" id="3.40.50.261:FF:000001">
    <property type="entry name" value="Succinate--CoA ligase [ADP-forming] subunit beta"/>
    <property type="match status" value="1"/>
</dbReference>
<dbReference type="Gene3D" id="3.30.1490.20">
    <property type="entry name" value="ATP-grasp fold, A domain"/>
    <property type="match status" value="1"/>
</dbReference>
<dbReference type="Gene3D" id="3.30.470.20">
    <property type="entry name" value="ATP-grasp fold, B domain"/>
    <property type="match status" value="1"/>
</dbReference>
<dbReference type="Gene3D" id="3.40.50.261">
    <property type="entry name" value="Succinyl-CoA synthetase domains"/>
    <property type="match status" value="1"/>
</dbReference>
<dbReference type="HAMAP" id="MF_00558">
    <property type="entry name" value="Succ_CoA_beta"/>
    <property type="match status" value="1"/>
</dbReference>
<dbReference type="InterPro" id="IPR011761">
    <property type="entry name" value="ATP-grasp"/>
</dbReference>
<dbReference type="InterPro" id="IPR013650">
    <property type="entry name" value="ATP-grasp_succ-CoA_synth-type"/>
</dbReference>
<dbReference type="InterPro" id="IPR013815">
    <property type="entry name" value="ATP_grasp_subdomain_1"/>
</dbReference>
<dbReference type="InterPro" id="IPR017866">
    <property type="entry name" value="Succ-CoA_synthase_bsu_CS"/>
</dbReference>
<dbReference type="InterPro" id="IPR005811">
    <property type="entry name" value="SUCC_ACL_C"/>
</dbReference>
<dbReference type="InterPro" id="IPR005809">
    <property type="entry name" value="Succ_CoA_ligase-like_bsu"/>
</dbReference>
<dbReference type="InterPro" id="IPR016102">
    <property type="entry name" value="Succinyl-CoA_synth-like"/>
</dbReference>
<dbReference type="NCBIfam" id="NF001913">
    <property type="entry name" value="PRK00696.1"/>
    <property type="match status" value="1"/>
</dbReference>
<dbReference type="NCBIfam" id="TIGR01016">
    <property type="entry name" value="sucCoAbeta"/>
    <property type="match status" value="1"/>
</dbReference>
<dbReference type="PANTHER" id="PTHR11815:SF10">
    <property type="entry name" value="SUCCINATE--COA LIGASE [GDP-FORMING] SUBUNIT BETA, MITOCHONDRIAL"/>
    <property type="match status" value="1"/>
</dbReference>
<dbReference type="PANTHER" id="PTHR11815">
    <property type="entry name" value="SUCCINYL-COA SYNTHETASE BETA CHAIN"/>
    <property type="match status" value="1"/>
</dbReference>
<dbReference type="Pfam" id="PF08442">
    <property type="entry name" value="ATP-grasp_2"/>
    <property type="match status" value="1"/>
</dbReference>
<dbReference type="Pfam" id="PF00549">
    <property type="entry name" value="Ligase_CoA"/>
    <property type="match status" value="1"/>
</dbReference>
<dbReference type="PIRSF" id="PIRSF001554">
    <property type="entry name" value="SucCS_beta"/>
    <property type="match status" value="1"/>
</dbReference>
<dbReference type="SUPFAM" id="SSF56059">
    <property type="entry name" value="Glutathione synthetase ATP-binding domain-like"/>
    <property type="match status" value="1"/>
</dbReference>
<dbReference type="SUPFAM" id="SSF52210">
    <property type="entry name" value="Succinyl-CoA synthetase domains"/>
    <property type="match status" value="1"/>
</dbReference>
<dbReference type="PROSITE" id="PS50975">
    <property type="entry name" value="ATP_GRASP"/>
    <property type="match status" value="1"/>
</dbReference>
<dbReference type="PROSITE" id="PS01217">
    <property type="entry name" value="SUCCINYL_COA_LIG_3"/>
    <property type="match status" value="1"/>
</dbReference>
<comment type="function">
    <text evidence="1">Succinyl-CoA synthetase functions in the citric acid cycle (TCA), coupling the hydrolysis of succinyl-CoA to the synthesis of either ATP or GTP and thus represents the only step of substrate-level phosphorylation in the TCA. The beta subunit provides nucleotide specificity of the enzyme and binds the substrate succinate, while the binding sites for coenzyme A and phosphate are found in the alpha subunit.</text>
</comment>
<comment type="catalytic activity">
    <reaction evidence="1">
        <text>succinate + ATP + CoA = succinyl-CoA + ADP + phosphate</text>
        <dbReference type="Rhea" id="RHEA:17661"/>
        <dbReference type="ChEBI" id="CHEBI:30031"/>
        <dbReference type="ChEBI" id="CHEBI:30616"/>
        <dbReference type="ChEBI" id="CHEBI:43474"/>
        <dbReference type="ChEBI" id="CHEBI:57287"/>
        <dbReference type="ChEBI" id="CHEBI:57292"/>
        <dbReference type="ChEBI" id="CHEBI:456216"/>
        <dbReference type="EC" id="6.2.1.5"/>
    </reaction>
    <physiologicalReaction direction="right-to-left" evidence="1">
        <dbReference type="Rhea" id="RHEA:17663"/>
    </physiologicalReaction>
</comment>
<comment type="catalytic activity">
    <reaction evidence="1">
        <text>GTP + succinate + CoA = succinyl-CoA + GDP + phosphate</text>
        <dbReference type="Rhea" id="RHEA:22120"/>
        <dbReference type="ChEBI" id="CHEBI:30031"/>
        <dbReference type="ChEBI" id="CHEBI:37565"/>
        <dbReference type="ChEBI" id="CHEBI:43474"/>
        <dbReference type="ChEBI" id="CHEBI:57287"/>
        <dbReference type="ChEBI" id="CHEBI:57292"/>
        <dbReference type="ChEBI" id="CHEBI:58189"/>
    </reaction>
    <physiologicalReaction direction="right-to-left" evidence="1">
        <dbReference type="Rhea" id="RHEA:22122"/>
    </physiologicalReaction>
</comment>
<comment type="cofactor">
    <cofactor evidence="1">
        <name>Mg(2+)</name>
        <dbReference type="ChEBI" id="CHEBI:18420"/>
    </cofactor>
    <text evidence="1">Binds 1 Mg(2+) ion per subunit.</text>
</comment>
<comment type="pathway">
    <text evidence="1">Carbohydrate metabolism; tricarboxylic acid cycle; succinate from succinyl-CoA (ligase route): step 1/1.</text>
</comment>
<comment type="subunit">
    <text evidence="1">Heterotetramer of two alpha and two beta subunits.</text>
</comment>
<comment type="similarity">
    <text evidence="1">Belongs to the succinate/malate CoA ligase beta subunit family.</text>
</comment>
<protein>
    <recommendedName>
        <fullName evidence="1">Succinate--CoA ligase [ADP-forming] subunit beta</fullName>
        <ecNumber evidence="1">6.2.1.5</ecNumber>
    </recommendedName>
    <alternativeName>
        <fullName evidence="1">Succinyl-CoA synthetase subunit beta</fullName>
        <shortName evidence="1">SCS-beta</shortName>
    </alternativeName>
</protein>
<feature type="chain" id="PRO_1000197700" description="Succinate--CoA ligase [ADP-forming] subunit beta">
    <location>
        <begin position="1"/>
        <end position="399"/>
    </location>
</feature>
<feature type="domain" description="ATP-grasp" evidence="1">
    <location>
        <begin position="9"/>
        <end position="254"/>
    </location>
</feature>
<feature type="binding site" evidence="1">
    <location>
        <position position="46"/>
    </location>
    <ligand>
        <name>ATP</name>
        <dbReference type="ChEBI" id="CHEBI:30616"/>
    </ligand>
</feature>
<feature type="binding site" evidence="1">
    <location>
        <begin position="53"/>
        <end position="55"/>
    </location>
    <ligand>
        <name>ATP</name>
        <dbReference type="ChEBI" id="CHEBI:30616"/>
    </ligand>
</feature>
<feature type="binding site" evidence="1">
    <location>
        <position position="109"/>
    </location>
    <ligand>
        <name>ATP</name>
        <dbReference type="ChEBI" id="CHEBI:30616"/>
    </ligand>
</feature>
<feature type="binding site" evidence="1">
    <location>
        <position position="112"/>
    </location>
    <ligand>
        <name>ATP</name>
        <dbReference type="ChEBI" id="CHEBI:30616"/>
    </ligand>
</feature>
<feature type="binding site" evidence="1">
    <location>
        <position position="117"/>
    </location>
    <ligand>
        <name>ATP</name>
        <dbReference type="ChEBI" id="CHEBI:30616"/>
    </ligand>
</feature>
<feature type="binding site" evidence="1">
    <location>
        <position position="209"/>
    </location>
    <ligand>
        <name>Mg(2+)</name>
        <dbReference type="ChEBI" id="CHEBI:18420"/>
    </ligand>
</feature>
<feature type="binding site" evidence="1">
    <location>
        <position position="223"/>
    </location>
    <ligand>
        <name>Mg(2+)</name>
        <dbReference type="ChEBI" id="CHEBI:18420"/>
    </ligand>
</feature>
<feature type="binding site" evidence="1">
    <location>
        <position position="274"/>
    </location>
    <ligand>
        <name>substrate</name>
        <note>ligand shared with subunit alpha</note>
    </ligand>
</feature>
<feature type="binding site" evidence="1">
    <location>
        <begin position="331"/>
        <end position="333"/>
    </location>
    <ligand>
        <name>substrate</name>
        <note>ligand shared with subunit alpha</note>
    </ligand>
</feature>
<reference key="1">
    <citation type="journal article" date="2010" name="J. Bacteriol.">
        <title>The genetic basis of laboratory adaptation in Caulobacter crescentus.</title>
        <authorList>
            <person name="Marks M.E."/>
            <person name="Castro-Rojas C.M."/>
            <person name="Teiling C."/>
            <person name="Du L."/>
            <person name="Kapatral V."/>
            <person name="Walunas T.L."/>
            <person name="Crosson S."/>
        </authorList>
    </citation>
    <scope>NUCLEOTIDE SEQUENCE [LARGE SCALE GENOMIC DNA]</scope>
    <source>
        <strain>NA1000 / CB15N</strain>
    </source>
</reference>
<sequence>MNIHEHQAKAVLAEFGAPVPRGFAAFTPDEAAAAAEKLGGPVFVVKSQIHAGGRGKGKFEGLGPDAKGGVRVVKSVEEVRSNAEEMLGRVLVTHQTGPKGKQVNRLYIEEGAAIAKEFYLSLLVDRASSKVSVVASTEGGMDIEDVAHSTPEKIHTFTIDPATGVWPTHHRALAKALGLTGGLAKEAASLLNQLYTAFMAKDMAMLEINPLIVTADDHLRVLDAKLSFDGNSLFRHPDIKALRDESEEDPKEIEASKYDLAYIALDGEIGCMVNGAGLAMATMDIIKLYGAEPANFLDVGGGASKEKVTAAFKIITADPAVKGILVNIFGGIMRCDIIAEGVIAAVKEVGLQVPLVVRLEGTNVELGKKIISESGLNVIAANDLSDGAEKIVAAVKGAR</sequence>
<evidence type="ECO:0000255" key="1">
    <source>
        <dbReference type="HAMAP-Rule" id="MF_00558"/>
    </source>
</evidence>
<gene>
    <name evidence="1" type="primary">sucC</name>
    <name type="ordered locus">CCNA_00340</name>
</gene>
<keyword id="KW-0067">ATP-binding</keyword>
<keyword id="KW-0436">Ligase</keyword>
<keyword id="KW-0460">Magnesium</keyword>
<keyword id="KW-0479">Metal-binding</keyword>
<keyword id="KW-0547">Nucleotide-binding</keyword>
<keyword id="KW-1185">Reference proteome</keyword>
<keyword id="KW-0816">Tricarboxylic acid cycle</keyword>
<proteinExistence type="inferred from homology"/>
<accession>B8GYZ1</accession>
<organism>
    <name type="scientific">Caulobacter vibrioides (strain NA1000 / CB15N)</name>
    <name type="common">Caulobacter crescentus</name>
    <dbReference type="NCBI Taxonomy" id="565050"/>
    <lineage>
        <taxon>Bacteria</taxon>
        <taxon>Pseudomonadati</taxon>
        <taxon>Pseudomonadota</taxon>
        <taxon>Alphaproteobacteria</taxon>
        <taxon>Caulobacterales</taxon>
        <taxon>Caulobacteraceae</taxon>
        <taxon>Caulobacter</taxon>
    </lineage>
</organism>
<name>SUCC_CAUVN</name>